<sequence>MYAIVKTGGKQYKVAEGDLVKVEKIEGEPGSSVALSPVLLVDGASITSGDDLSSVAVNAEIVEHTKGPKIRNMHYRNKTGYKRRHGHRQPLTVVKITGIK</sequence>
<name>RL21_CORK4</name>
<keyword id="KW-1185">Reference proteome</keyword>
<keyword id="KW-0687">Ribonucleoprotein</keyword>
<keyword id="KW-0689">Ribosomal protein</keyword>
<keyword id="KW-0694">RNA-binding</keyword>
<keyword id="KW-0699">rRNA-binding</keyword>
<evidence type="ECO:0000255" key="1">
    <source>
        <dbReference type="HAMAP-Rule" id="MF_01363"/>
    </source>
</evidence>
<evidence type="ECO:0000305" key="2"/>
<protein>
    <recommendedName>
        <fullName evidence="1">Large ribosomal subunit protein bL21</fullName>
    </recommendedName>
    <alternativeName>
        <fullName evidence="2">50S ribosomal protein L21</fullName>
    </alternativeName>
</protein>
<gene>
    <name evidence="1" type="primary">rplU</name>
    <name type="ordered locus">ckrop_1360</name>
</gene>
<reference key="1">
    <citation type="journal article" date="2008" name="J. Biotechnol.">
        <title>Ultrafast pyrosequencing of Corynebacterium kroppenstedtii DSM44385 revealed insights into the physiology of a lipophilic corynebacterium that lacks mycolic acids.</title>
        <authorList>
            <person name="Tauch A."/>
            <person name="Schneider J."/>
            <person name="Szczepanowski R."/>
            <person name="Tilker A."/>
            <person name="Viehoever P."/>
            <person name="Gartemann K.-H."/>
            <person name="Arnold W."/>
            <person name="Blom J."/>
            <person name="Brinkrolf K."/>
            <person name="Brune I."/>
            <person name="Goetker S."/>
            <person name="Weisshaar B."/>
            <person name="Goesmann A."/>
            <person name="Droege M."/>
            <person name="Puehler A."/>
        </authorList>
    </citation>
    <scope>NUCLEOTIDE SEQUENCE [LARGE SCALE GENOMIC DNA]</scope>
    <source>
        <strain>DSM 44385 / JCM 11950 / CIP 105744 / CCUG 35717</strain>
    </source>
</reference>
<organism>
    <name type="scientific">Corynebacterium kroppenstedtii (strain DSM 44385 / JCM 11950 / CIP 105744 / CCUG 35717)</name>
    <dbReference type="NCBI Taxonomy" id="645127"/>
    <lineage>
        <taxon>Bacteria</taxon>
        <taxon>Bacillati</taxon>
        <taxon>Actinomycetota</taxon>
        <taxon>Actinomycetes</taxon>
        <taxon>Mycobacteriales</taxon>
        <taxon>Corynebacteriaceae</taxon>
        <taxon>Corynebacterium</taxon>
    </lineage>
</organism>
<feature type="chain" id="PRO_1000214883" description="Large ribosomal subunit protein bL21">
    <location>
        <begin position="1"/>
        <end position="100"/>
    </location>
</feature>
<comment type="function">
    <text evidence="1">This protein binds to 23S rRNA in the presence of protein L20.</text>
</comment>
<comment type="subunit">
    <text evidence="1">Part of the 50S ribosomal subunit. Contacts protein L20.</text>
</comment>
<comment type="similarity">
    <text evidence="1">Belongs to the bacterial ribosomal protein bL21 family.</text>
</comment>
<dbReference type="EMBL" id="CP001620">
    <property type="protein sequence ID" value="ACR18101.1"/>
    <property type="molecule type" value="Genomic_DNA"/>
</dbReference>
<dbReference type="RefSeq" id="WP_012731988.1">
    <property type="nucleotide sequence ID" value="NC_012704.1"/>
</dbReference>
<dbReference type="SMR" id="C4LJU6"/>
<dbReference type="STRING" id="645127.ckrop_1360"/>
<dbReference type="KEGG" id="ckp:ckrop_1360"/>
<dbReference type="eggNOG" id="COG0261">
    <property type="taxonomic scope" value="Bacteria"/>
</dbReference>
<dbReference type="HOGENOM" id="CLU_061463_3_2_11"/>
<dbReference type="OrthoDB" id="9813334at2"/>
<dbReference type="Proteomes" id="UP000001473">
    <property type="component" value="Chromosome"/>
</dbReference>
<dbReference type="GO" id="GO:0005737">
    <property type="term" value="C:cytoplasm"/>
    <property type="evidence" value="ECO:0007669"/>
    <property type="project" value="UniProtKB-ARBA"/>
</dbReference>
<dbReference type="GO" id="GO:1990904">
    <property type="term" value="C:ribonucleoprotein complex"/>
    <property type="evidence" value="ECO:0007669"/>
    <property type="project" value="UniProtKB-KW"/>
</dbReference>
<dbReference type="GO" id="GO:0005840">
    <property type="term" value="C:ribosome"/>
    <property type="evidence" value="ECO:0007669"/>
    <property type="project" value="UniProtKB-KW"/>
</dbReference>
<dbReference type="GO" id="GO:0019843">
    <property type="term" value="F:rRNA binding"/>
    <property type="evidence" value="ECO:0007669"/>
    <property type="project" value="UniProtKB-UniRule"/>
</dbReference>
<dbReference type="GO" id="GO:0003735">
    <property type="term" value="F:structural constituent of ribosome"/>
    <property type="evidence" value="ECO:0007669"/>
    <property type="project" value="InterPro"/>
</dbReference>
<dbReference type="GO" id="GO:0006412">
    <property type="term" value="P:translation"/>
    <property type="evidence" value="ECO:0007669"/>
    <property type="project" value="UniProtKB-UniRule"/>
</dbReference>
<dbReference type="HAMAP" id="MF_01363">
    <property type="entry name" value="Ribosomal_bL21"/>
    <property type="match status" value="1"/>
</dbReference>
<dbReference type="InterPro" id="IPR028909">
    <property type="entry name" value="bL21-like"/>
</dbReference>
<dbReference type="InterPro" id="IPR036164">
    <property type="entry name" value="bL21-like_sf"/>
</dbReference>
<dbReference type="InterPro" id="IPR001787">
    <property type="entry name" value="Ribosomal_bL21"/>
</dbReference>
<dbReference type="NCBIfam" id="TIGR00061">
    <property type="entry name" value="L21"/>
    <property type="match status" value="1"/>
</dbReference>
<dbReference type="PANTHER" id="PTHR21349">
    <property type="entry name" value="50S RIBOSOMAL PROTEIN L21"/>
    <property type="match status" value="1"/>
</dbReference>
<dbReference type="PANTHER" id="PTHR21349:SF0">
    <property type="entry name" value="LARGE RIBOSOMAL SUBUNIT PROTEIN BL21M"/>
    <property type="match status" value="1"/>
</dbReference>
<dbReference type="Pfam" id="PF00829">
    <property type="entry name" value="Ribosomal_L21p"/>
    <property type="match status" value="1"/>
</dbReference>
<dbReference type="SUPFAM" id="SSF141091">
    <property type="entry name" value="L21p-like"/>
    <property type="match status" value="1"/>
</dbReference>
<accession>C4LJU6</accession>
<proteinExistence type="inferred from homology"/>